<sequence length="232" mass="25969">MIKDERWEKVYSFDDSPYLMEILTELRNKDTDSIAFRKGLVKLGRYMGYEIIKTMDVEKIKIETPLEETEGIIVKDRKNVVIVTVLRAAVPLMEGLVKVFEHARIGIVSASRGKAPKFEIEMNYVKIPQITPEDTVIVADPMIATGSTLITVMEEIKKYGTPKRLIVLGILAAPEGINRIKEKFPEAEIFVTQIDRGLNSKGYILPGLGDAGDRAFGAPIKIPTLPQVHTID</sequence>
<evidence type="ECO:0000255" key="1">
    <source>
        <dbReference type="HAMAP-Rule" id="MF_01218"/>
    </source>
</evidence>
<accession>C6A3U9</accession>
<organism>
    <name type="scientific">Thermococcus sibiricus (strain DSM 12597 / MM 739)</name>
    <dbReference type="NCBI Taxonomy" id="604354"/>
    <lineage>
        <taxon>Archaea</taxon>
        <taxon>Methanobacteriati</taxon>
        <taxon>Methanobacteriota</taxon>
        <taxon>Thermococci</taxon>
        <taxon>Thermococcales</taxon>
        <taxon>Thermococcaceae</taxon>
        <taxon>Thermococcus</taxon>
    </lineage>
</organism>
<gene>
    <name evidence="1" type="primary">upp</name>
    <name type="ordered locus">TSIB_1240</name>
</gene>
<dbReference type="EC" id="2.4.2.9" evidence="1"/>
<dbReference type="EMBL" id="CP001463">
    <property type="protein sequence ID" value="ACS90294.1"/>
    <property type="molecule type" value="Genomic_DNA"/>
</dbReference>
<dbReference type="RefSeq" id="WP_015849513.1">
    <property type="nucleotide sequence ID" value="NC_012883.1"/>
</dbReference>
<dbReference type="SMR" id="C6A3U9"/>
<dbReference type="STRING" id="604354.TSIB_1240"/>
<dbReference type="GeneID" id="8096239"/>
<dbReference type="KEGG" id="tsi:TSIB_1240"/>
<dbReference type="eggNOG" id="arCOG04128">
    <property type="taxonomic scope" value="Archaea"/>
</dbReference>
<dbReference type="HOGENOM" id="CLU_067096_2_0_2"/>
<dbReference type="OrthoDB" id="80352at2157"/>
<dbReference type="UniPathway" id="UPA00574">
    <property type="reaction ID" value="UER00636"/>
</dbReference>
<dbReference type="Proteomes" id="UP000009079">
    <property type="component" value="Chromosome"/>
</dbReference>
<dbReference type="GO" id="GO:0005525">
    <property type="term" value="F:GTP binding"/>
    <property type="evidence" value="ECO:0007669"/>
    <property type="project" value="UniProtKB-KW"/>
</dbReference>
<dbReference type="GO" id="GO:0000287">
    <property type="term" value="F:magnesium ion binding"/>
    <property type="evidence" value="ECO:0007669"/>
    <property type="project" value="UniProtKB-UniRule"/>
</dbReference>
<dbReference type="GO" id="GO:0004845">
    <property type="term" value="F:uracil phosphoribosyltransferase activity"/>
    <property type="evidence" value="ECO:0007669"/>
    <property type="project" value="UniProtKB-UniRule"/>
</dbReference>
<dbReference type="GO" id="GO:0044206">
    <property type="term" value="P:UMP salvage"/>
    <property type="evidence" value="ECO:0007669"/>
    <property type="project" value="UniProtKB-UniRule"/>
</dbReference>
<dbReference type="GO" id="GO:0006223">
    <property type="term" value="P:uracil salvage"/>
    <property type="evidence" value="ECO:0007669"/>
    <property type="project" value="InterPro"/>
</dbReference>
<dbReference type="CDD" id="cd06223">
    <property type="entry name" value="PRTases_typeI"/>
    <property type="match status" value="1"/>
</dbReference>
<dbReference type="FunFam" id="3.40.50.2020:FF:000023">
    <property type="entry name" value="Probable uracil phosphoribosyltransferase"/>
    <property type="match status" value="1"/>
</dbReference>
<dbReference type="Gene3D" id="3.40.50.2020">
    <property type="match status" value="1"/>
</dbReference>
<dbReference type="HAMAP" id="MF_01218_A">
    <property type="entry name" value="Upp_A"/>
    <property type="match status" value="1"/>
</dbReference>
<dbReference type="InterPro" id="IPR000836">
    <property type="entry name" value="PRibTrfase_dom"/>
</dbReference>
<dbReference type="InterPro" id="IPR029057">
    <property type="entry name" value="PRTase-like"/>
</dbReference>
<dbReference type="InterPro" id="IPR034331">
    <property type="entry name" value="Upp_A"/>
</dbReference>
<dbReference type="InterPro" id="IPR005765">
    <property type="entry name" value="Ura_phspho_trans"/>
</dbReference>
<dbReference type="NCBIfam" id="NF001097">
    <property type="entry name" value="PRK00129.1"/>
    <property type="match status" value="1"/>
</dbReference>
<dbReference type="NCBIfam" id="TIGR01091">
    <property type="entry name" value="upp"/>
    <property type="match status" value="1"/>
</dbReference>
<dbReference type="Pfam" id="PF14681">
    <property type="entry name" value="UPRTase"/>
    <property type="match status" value="1"/>
</dbReference>
<dbReference type="SUPFAM" id="SSF53271">
    <property type="entry name" value="PRTase-like"/>
    <property type="match status" value="1"/>
</dbReference>
<reference key="1">
    <citation type="journal article" date="2009" name="Appl. Environ. Microbiol.">
        <title>Metabolic versatility and indigenous origin of the archaeon Thermococcus sibiricus, isolated from a siberian oil reservoir, as revealed by genome analysis.</title>
        <authorList>
            <person name="Mardanov A.V."/>
            <person name="Ravin N.V."/>
            <person name="Svetlitchnyi V.A."/>
            <person name="Beletsky A.V."/>
            <person name="Miroshnichenko M.L."/>
            <person name="Bonch-Osmolovskaya E.A."/>
            <person name="Skryabin K.G."/>
        </authorList>
    </citation>
    <scope>NUCLEOTIDE SEQUENCE [LARGE SCALE GENOMIC DNA]</scope>
    <source>
        <strain>DSM 12597 / MM 739</strain>
    </source>
</reference>
<feature type="chain" id="PRO_1000213946" description="Uracil phosphoribosyltransferase">
    <location>
        <begin position="1"/>
        <end position="232"/>
    </location>
</feature>
<feature type="binding site" evidence="1">
    <location>
        <begin position="38"/>
        <end position="42"/>
    </location>
    <ligand>
        <name>GTP</name>
        <dbReference type="ChEBI" id="CHEBI:37565"/>
    </ligand>
</feature>
<feature type="binding site" evidence="1">
    <location>
        <position position="87"/>
    </location>
    <ligand>
        <name>5-phospho-alpha-D-ribose 1-diphosphate</name>
        <dbReference type="ChEBI" id="CHEBI:58017"/>
    </ligand>
</feature>
<feature type="binding site" evidence="1">
    <location>
        <position position="112"/>
    </location>
    <ligand>
        <name>5-phospho-alpha-D-ribose 1-diphosphate</name>
        <dbReference type="ChEBI" id="CHEBI:58017"/>
    </ligand>
</feature>
<feature type="binding site" evidence="1">
    <location>
        <begin position="140"/>
        <end position="148"/>
    </location>
    <ligand>
        <name>5-phospho-alpha-D-ribose 1-diphosphate</name>
        <dbReference type="ChEBI" id="CHEBI:58017"/>
    </ligand>
</feature>
<feature type="binding site" evidence="1">
    <location>
        <position position="204"/>
    </location>
    <ligand>
        <name>uracil</name>
        <dbReference type="ChEBI" id="CHEBI:17568"/>
    </ligand>
</feature>
<feature type="binding site" evidence="1">
    <location>
        <begin position="209"/>
        <end position="211"/>
    </location>
    <ligand>
        <name>uracil</name>
        <dbReference type="ChEBI" id="CHEBI:17568"/>
    </ligand>
</feature>
<feature type="binding site" evidence="1">
    <location>
        <position position="210"/>
    </location>
    <ligand>
        <name>5-phospho-alpha-D-ribose 1-diphosphate</name>
        <dbReference type="ChEBI" id="CHEBI:58017"/>
    </ligand>
</feature>
<protein>
    <recommendedName>
        <fullName evidence="1">Uracil phosphoribosyltransferase</fullName>
        <ecNumber evidence="1">2.4.2.9</ecNumber>
    </recommendedName>
    <alternativeName>
        <fullName evidence="1">UMP pyrophosphorylase</fullName>
    </alternativeName>
    <alternativeName>
        <fullName evidence="1">UPRTase</fullName>
    </alternativeName>
</protein>
<keyword id="KW-0021">Allosteric enzyme</keyword>
<keyword id="KW-0328">Glycosyltransferase</keyword>
<keyword id="KW-0342">GTP-binding</keyword>
<keyword id="KW-0460">Magnesium</keyword>
<keyword id="KW-0547">Nucleotide-binding</keyword>
<keyword id="KW-1185">Reference proteome</keyword>
<keyword id="KW-0808">Transferase</keyword>
<name>UPP_THESM</name>
<comment type="function">
    <text evidence="1">Catalyzes the conversion of uracil and 5-phospho-alpha-D-ribose 1-diphosphate (PRPP) to UMP and diphosphate.</text>
</comment>
<comment type="catalytic activity">
    <reaction evidence="1">
        <text>UMP + diphosphate = 5-phospho-alpha-D-ribose 1-diphosphate + uracil</text>
        <dbReference type="Rhea" id="RHEA:13017"/>
        <dbReference type="ChEBI" id="CHEBI:17568"/>
        <dbReference type="ChEBI" id="CHEBI:33019"/>
        <dbReference type="ChEBI" id="CHEBI:57865"/>
        <dbReference type="ChEBI" id="CHEBI:58017"/>
        <dbReference type="EC" id="2.4.2.9"/>
    </reaction>
</comment>
<comment type="cofactor">
    <cofactor evidence="1">
        <name>Mg(2+)</name>
        <dbReference type="ChEBI" id="CHEBI:18420"/>
    </cofactor>
    <text evidence="1">Binds 1 Mg(2+) ion per subunit. The magnesium is bound as Mg-PRPP.</text>
</comment>
<comment type="activity regulation">
    <text evidence="1">Allosterically activated by GTP.</text>
</comment>
<comment type="pathway">
    <text evidence="1">Pyrimidine metabolism; UMP biosynthesis via salvage pathway; UMP from uracil: step 1/1.</text>
</comment>
<comment type="similarity">
    <text evidence="1">Belongs to the UPRTase family.</text>
</comment>
<proteinExistence type="inferred from homology"/>